<proteinExistence type="predicted"/>
<keyword id="KW-0175">Coiled coil</keyword>
<keyword id="KW-1185">Reference proteome</keyword>
<dbReference type="EMBL" id="AY653733">
    <property type="protein sequence ID" value="AAV50286.1"/>
    <property type="molecule type" value="Genomic_DNA"/>
</dbReference>
<dbReference type="Proteomes" id="UP000001134">
    <property type="component" value="Genome"/>
</dbReference>
<dbReference type="InterPro" id="IPR043886">
    <property type="entry name" value="DUF5846"/>
</dbReference>
<dbReference type="Pfam" id="PF19164">
    <property type="entry name" value="DUF5846"/>
    <property type="match status" value="1"/>
</dbReference>
<gene>
    <name type="ordered locus">MIMI_R11</name>
</gene>
<evidence type="ECO:0000255" key="1"/>
<name>YR011_MIMIV</name>
<protein>
    <recommendedName>
        <fullName>Uncharacterized protein R11</fullName>
    </recommendedName>
</protein>
<feature type="chain" id="PRO_0000071176" description="Uncharacterized protein R11">
    <location>
        <begin position="1"/>
        <end position="267"/>
    </location>
</feature>
<feature type="coiled-coil region" evidence="1">
    <location>
        <begin position="37"/>
        <end position="62"/>
    </location>
</feature>
<organismHost>
    <name type="scientific">Acanthamoeba polyphaga</name>
    <name type="common">Amoeba</name>
    <dbReference type="NCBI Taxonomy" id="5757"/>
</organismHost>
<organism>
    <name type="scientific">Acanthamoeba polyphaga mimivirus</name>
    <name type="common">APMV</name>
    <dbReference type="NCBI Taxonomy" id="212035"/>
    <lineage>
        <taxon>Viruses</taxon>
        <taxon>Varidnaviria</taxon>
        <taxon>Bamfordvirae</taxon>
        <taxon>Nucleocytoviricota</taxon>
        <taxon>Megaviricetes</taxon>
        <taxon>Imitervirales</taxon>
        <taxon>Mimiviridae</taxon>
        <taxon>Megamimivirinae</taxon>
        <taxon>Mimivirus</taxon>
        <taxon>Mimivirus bradfordmassiliense</taxon>
    </lineage>
</organism>
<reference key="1">
    <citation type="journal article" date="2004" name="Science">
        <title>The 1.2-megabase genome sequence of Mimivirus.</title>
        <authorList>
            <person name="Raoult D."/>
            <person name="Audic S."/>
            <person name="Robert C."/>
            <person name="Abergel C."/>
            <person name="Renesto P."/>
            <person name="Ogata H."/>
            <person name="La Scola B."/>
            <person name="Susan M."/>
            <person name="Claverie J.-M."/>
        </authorList>
    </citation>
    <scope>NUCLEOTIDE SEQUENCE [LARGE SCALE GENOMIC DNA]</scope>
    <source>
        <strain>Rowbotham-Bradford</strain>
    </source>
</reference>
<accession>Q5UP87</accession>
<sequence>MSKIFRKFAKTEFIFRFNIIDHNVILYSLYLDIIPMDSSNNYKKKYKKYKRKYIDLKKQLNYNQIHNFYFVHSTTNFSNLRDILKSGVIYPGKFLRPDQQKLSVNSEDVFANIYFEDINNLTHLQDFSILLHPKIIYDCGMFFNKGWQGGGKGDIIINATDSPVQIAHKLNEIREFLKNPILPEKIREFNPFLHHEAFFNHPISLNNGNLIGIICNHCDGSFNDYITGETHKESLKIINNIINDKLYNNVKIITRNYPIPKLNELLH</sequence>